<dbReference type="EMBL" id="U39362">
    <property type="protein sequence ID" value="AAA81038.1"/>
    <property type="molecule type" value="Genomic_DNA"/>
</dbReference>
<dbReference type="SMR" id="Q89428"/>
<dbReference type="Proteomes" id="UP000007691">
    <property type="component" value="Genome"/>
</dbReference>
<dbReference type="GO" id="GO:0030430">
    <property type="term" value="C:host cell cytoplasm"/>
    <property type="evidence" value="ECO:0007669"/>
    <property type="project" value="UniProtKB-SubCell"/>
</dbReference>
<dbReference type="GO" id="GO:0020002">
    <property type="term" value="C:host cell plasma membrane"/>
    <property type="evidence" value="ECO:0007669"/>
    <property type="project" value="UniProtKB-SubCell"/>
</dbReference>
<dbReference type="GO" id="GO:0016020">
    <property type="term" value="C:membrane"/>
    <property type="evidence" value="ECO:0007669"/>
    <property type="project" value="UniProtKB-UniRule"/>
</dbReference>
<dbReference type="GO" id="GO:0044423">
    <property type="term" value="C:virion component"/>
    <property type="evidence" value="ECO:0007669"/>
    <property type="project" value="UniProtKB-UniRule"/>
</dbReference>
<dbReference type="GO" id="GO:0046872">
    <property type="term" value="F:metal ion binding"/>
    <property type="evidence" value="ECO:0007669"/>
    <property type="project" value="UniProtKB-KW"/>
</dbReference>
<dbReference type="GO" id="GO:0003723">
    <property type="term" value="F:RNA binding"/>
    <property type="evidence" value="ECO:0007669"/>
    <property type="project" value="UniProtKB-UniRule"/>
</dbReference>
<dbReference type="GO" id="GO:0019058">
    <property type="term" value="P:viral life cycle"/>
    <property type="evidence" value="ECO:0007669"/>
    <property type="project" value="InterPro"/>
</dbReference>
<dbReference type="HAMAP" id="MF_04081">
    <property type="entry name" value="HIV_VIF"/>
    <property type="match status" value="1"/>
</dbReference>
<dbReference type="InterPro" id="IPR000475">
    <property type="entry name" value="Vif"/>
</dbReference>
<dbReference type="Pfam" id="PF00559">
    <property type="entry name" value="Vif"/>
    <property type="match status" value="1"/>
</dbReference>
<dbReference type="PRINTS" id="PR00349">
    <property type="entry name" value="VIRIONINFFCT"/>
</dbReference>
<name>VIF_HV1B9</name>
<protein>
    <recommendedName>
        <fullName evidence="2">Virion infectivity factor</fullName>
        <shortName evidence="2">Vif</shortName>
    </recommendedName>
    <alternativeName>
        <fullName evidence="2">SOR protein</fullName>
    </alternativeName>
    <component>
        <recommendedName>
            <fullName evidence="2">p17</fullName>
        </recommendedName>
    </component>
    <component>
        <recommendedName>
            <fullName evidence="2">p7</fullName>
        </recommendedName>
    </component>
</protein>
<organismHost>
    <name type="scientific">Homo sapiens</name>
    <name type="common">Human</name>
    <dbReference type="NCBI Taxonomy" id="9606"/>
</organismHost>
<comment type="function">
    <text evidence="2">Counteracts the innate antiviral activity of host APOBEC3F and APOBEC3G by promoting their ubiquitination and degradation. Acts as a substrate recognition component of an E3 ubiquitin-protein ligase complex: mechanistically, Vif hijacks a host cullin-5-RING E3 ubiquitin-protein ligase complex (ECS complex) and the transcription coactivator CBFB/CBF-beta to form an active E3 ubiquitin-protein ligase complex that targets APOBEC3G and APOBEC3F for polyubiquitination, leading to their degradation by the proteasome. Vif interaction with APOBEC3G also blocks its cytidine deaminase activity in a proteasome-independent manner, suggesting a dual inhibitory mechanism. May interact directly with APOBEC3G mRNA in order to inhibit its translation. Association with CBFB/CBF-beta also inhibits the transcription coactivator activity of CBFB/CBF-beta. Seems to play a role in viral morphology by affecting the stability of the viral nucleoprotein core. Finally, Vif also contributes to the G2 cell cycle arrest observed in HIV infected cells.</text>
</comment>
<comment type="subunit">
    <text evidence="1">Homomultimer; in vitro and presumably in vivo. Interacts with viral RNA and Pr55Gag precursor; these interactions mediate Vif incorporation into the virion. Interacts with the viral reverse transcriptase. Forms cullin-5-RING E3 ubiquitin-protein ligase complex (ECS complex) by interacting with host CUL5, RBX2, elongin BC complex (ELOB and ELOC) and CBFB/CBF-beta. Within the ECS complex, Vif interacts directly with host CUL5, ELOC and APOBEC (APOBEC3F and APOBEC3G) substrates. The ECS complex also contains some single-stranded RNA (ssRNA) that acts as a glue that bridges Vif with APOBEC (APOBEC3F and APOBEC3G) substrates. Interacts with host UBCE7IP1 isoform 3/ZIN and possibly with SAT. Interacts with host tyrosine kinases HCK and FYN; these interactions may decrease level of phosphorylated APOBEC3G incorporation into virions. Interacts with host ABCE1; this interaction may play a role in protecting viral RNA from damage during viral assembly. Interacts with host MDM2; this interaction targets Vif for degradation by the proteasome.</text>
</comment>
<comment type="subcellular location">
    <subcellularLocation>
        <location evidence="2">Host cytoplasm</location>
    </subcellularLocation>
    <subcellularLocation>
        <location evidence="2">Host cell membrane</location>
        <topology evidence="2">Peripheral membrane protein</topology>
        <orientation evidence="2">Cytoplasmic side</orientation>
    </subcellularLocation>
    <subcellularLocation>
        <location evidence="2">Virion</location>
    </subcellularLocation>
    <text evidence="2">In the cytoplasm, seems to colocalize with intermediate filament vimentin. A fraction is associated with the cytoplasmic side of cellular membranes, presumably via the interaction with Pr55Gag precursor. Incorporated in virions at a ratio of approximately 7 to 20 molecules per virion.</text>
</comment>
<comment type="induction">
    <text evidence="2">Expressed late during infection in a Rev-dependent manner.</text>
</comment>
<comment type="domain">
    <text evidence="2">The BC-like-box motif mediates the interaction with elongin BC complex.</text>
</comment>
<comment type="domain">
    <text evidence="2">The HCCH motif (H-x(5)-C-x(18)-C-x(5)-H) mediates the interaction with CUL5.</text>
</comment>
<comment type="PTM">
    <text evidence="2">Processed in virion by the viral protease.</text>
</comment>
<comment type="PTM">
    <text evidence="2">Highly phosphorylated on serine and threonine residues.</text>
</comment>
<comment type="PTM">
    <text evidence="2">Polyubiquitinated and degraded by the proteasome in the presence of APOBEC3G.</text>
</comment>
<comment type="miscellaneous">
    <text evidence="2">Vif-defective viruses show catastrophic failure in reverse transcription due to APOBEC-induced mutations that initiate a DNA base repair pathway and compromise the structural integrity of the ssDNA. In the absence of Vif, the virion is morphologically abnormal.</text>
</comment>
<comment type="miscellaneous">
    <text evidence="2">HIV-1 lineages are divided in three main groups, M (for Major), O (for Outlier), and N (for New, or Non-M, Non-O). The vast majority of strains found worldwide belong to the group M. Group O seems to be endemic to and largely confined to Cameroon and neighboring countries in West Central Africa, where these viruses represent a small minority of HIV-1 strains. The group N is represented by a limited number of isolates from Cameroonian persons. The group M is further subdivided in 9 clades or subtypes (A to D, F to H, J and K).</text>
</comment>
<comment type="miscellaneous">
    <text evidence="2">Required for replication in 'nonpermissive' cells, including primary T-cells, macrophages and certain T-cell lines, but is dispensable for replication in 'permissive' cell lines, such as 293T cells. In nonpermissive cells, Vif-defective viruses can produce virions, but they fail to complete reverse transcription and cannot successfully infect new cells.</text>
</comment>
<comment type="similarity">
    <text evidence="2">Belongs to the primate lentivirus group Vif protein family.</text>
</comment>
<feature type="chain" id="PRO_0000250984" description="Virion infectivity factor" evidence="2">
    <location>
        <begin position="1"/>
        <end position="192"/>
    </location>
</feature>
<feature type="chain" id="PRO_0000250985" description="p17" evidence="2">
    <location>
        <begin position="1"/>
        <end position="150"/>
    </location>
</feature>
<feature type="chain" id="PRO_0000250986" description="p7" evidence="2">
    <location>
        <begin position="151"/>
        <end position="192"/>
    </location>
</feature>
<feature type="region of interest" description="Interaction with host APOBEC3F; F1-box" evidence="2">
    <location>
        <begin position="14"/>
        <end position="17"/>
    </location>
</feature>
<feature type="region of interest" description="Interaction with host APOBEC3G; G-box" evidence="2">
    <location>
        <begin position="40"/>
        <end position="44"/>
    </location>
</feature>
<feature type="region of interest" description="Interaction with host APOBEC3F and APOBEC3G; FG-box" evidence="2">
    <location>
        <begin position="54"/>
        <end position="72"/>
    </location>
</feature>
<feature type="region of interest" description="Interaction with host APOBEC3F; F2-box" evidence="2">
    <location>
        <begin position="74"/>
        <end position="79"/>
    </location>
</feature>
<feature type="region of interest" description="RNA-binding" evidence="2">
    <location>
        <begin position="75"/>
        <end position="114"/>
    </location>
</feature>
<feature type="region of interest" description="SOCS box-like" evidence="2">
    <location>
        <begin position="151"/>
        <end position="180"/>
    </location>
</feature>
<feature type="region of interest" description="Multimerization" evidence="2">
    <location>
        <begin position="151"/>
        <end position="164"/>
    </location>
</feature>
<feature type="region of interest" description="Disordered" evidence="3">
    <location>
        <begin position="162"/>
        <end position="192"/>
    </location>
</feature>
<feature type="region of interest" description="Membrane association" evidence="2">
    <location>
        <begin position="171"/>
        <end position="172"/>
    </location>
</feature>
<feature type="short sequence motif" description="HCCH motif" evidence="2">
    <location>
        <begin position="108"/>
        <end position="139"/>
    </location>
</feature>
<feature type="short sequence motif" description="BC-box-like motif" evidence="2">
    <location>
        <begin position="144"/>
        <end position="153"/>
    </location>
</feature>
<feature type="compositionally biased region" description="Basic residues" evidence="3">
    <location>
        <begin position="176"/>
        <end position="186"/>
    </location>
</feature>
<feature type="binding site" evidence="2">
    <location>
        <position position="108"/>
    </location>
    <ligand>
        <name>Zn(2+)</name>
        <dbReference type="ChEBI" id="CHEBI:29105"/>
    </ligand>
</feature>
<feature type="binding site" evidence="2">
    <location>
        <position position="114"/>
    </location>
    <ligand>
        <name>Zn(2+)</name>
        <dbReference type="ChEBI" id="CHEBI:29105"/>
    </ligand>
</feature>
<feature type="binding site" evidence="2">
    <location>
        <position position="133"/>
    </location>
    <ligand>
        <name>Zn(2+)</name>
        <dbReference type="ChEBI" id="CHEBI:29105"/>
    </ligand>
</feature>
<feature type="binding site" evidence="2">
    <location>
        <position position="139"/>
    </location>
    <ligand>
        <name>Zn(2+)</name>
        <dbReference type="ChEBI" id="CHEBI:29105"/>
    </ligand>
</feature>
<feature type="site" description="Cleavage in virion (by viral protease)" evidence="2">
    <location>
        <begin position="150"/>
        <end position="151"/>
    </location>
</feature>
<feature type="modified residue" description="Phosphothreonine; by host MAP4K1" evidence="2">
    <location>
        <position position="96"/>
    </location>
</feature>
<feature type="modified residue" description="Phosphoserine; by host" evidence="2">
    <location>
        <position position="144"/>
    </location>
</feature>
<feature type="modified residue" description="Phosphothreonine; by host" evidence="2">
    <location>
        <position position="155"/>
    </location>
</feature>
<feature type="modified residue" description="Phosphoserine; by host MAP4K1" evidence="2">
    <location>
        <position position="165"/>
    </location>
</feature>
<feature type="modified residue" description="Phosphothreonine; by host" evidence="2">
    <location>
        <position position="188"/>
    </location>
</feature>
<sequence>MENRWQVMIVWQVDRMRIRTWKSLVKHHMYISGKAKGWSYRHHYESTNPRISSEVHIPLGDAKLVVTTYWGLHTGERDWHLGQGVSIEWRKKRYSTQVDPGLADRLIHLYYFDCFSDSAIRKSILGHIVSPSCEYQAGHNKVGSLQYLALAALTTPRRIKPPFPSVTKLTEDRWNKPQKTKGHRGSHTMTGH</sequence>
<keyword id="KW-0014">AIDS</keyword>
<keyword id="KW-1032">Host cell membrane</keyword>
<keyword id="KW-1035">Host cytoplasm</keyword>
<keyword id="KW-1043">Host membrane</keyword>
<keyword id="KW-0945">Host-virus interaction</keyword>
<keyword id="KW-0472">Membrane</keyword>
<keyword id="KW-0479">Metal-binding</keyword>
<keyword id="KW-0597">Phosphoprotein</keyword>
<keyword id="KW-1185">Reference proteome</keyword>
<keyword id="KW-0694">RNA-binding</keyword>
<keyword id="KW-0832">Ubl conjugation</keyword>
<keyword id="KW-0833">Ubl conjugation pathway</keyword>
<keyword id="KW-0946">Virion</keyword>
<keyword id="KW-0862">Zinc</keyword>
<organism>
    <name type="scientific">Human immunodeficiency virus type 1 group M subtype B (strain 89.6)</name>
    <name type="common">HIV-1</name>
    <dbReference type="NCBI Taxonomy" id="401671"/>
    <lineage>
        <taxon>Viruses</taxon>
        <taxon>Riboviria</taxon>
        <taxon>Pararnavirae</taxon>
        <taxon>Artverviricota</taxon>
        <taxon>Revtraviricetes</taxon>
        <taxon>Ortervirales</taxon>
        <taxon>Retroviridae</taxon>
        <taxon>Orthoretrovirinae</taxon>
        <taxon>Lentivirus</taxon>
        <taxon>Human immunodeficiency virus type 1</taxon>
    </lineage>
</organism>
<evidence type="ECO:0000250" key="1">
    <source>
        <dbReference type="UniProtKB" id="O70897"/>
    </source>
</evidence>
<evidence type="ECO:0000255" key="2">
    <source>
        <dbReference type="HAMAP-Rule" id="MF_04081"/>
    </source>
</evidence>
<evidence type="ECO:0000256" key="3">
    <source>
        <dbReference type="SAM" id="MobiDB-lite"/>
    </source>
</evidence>
<accession>Q89428</accession>
<gene>
    <name evidence="2" type="primary">vif</name>
</gene>
<reference key="1">
    <citation type="journal article" date="1992" name="J. Virol.">
        <title>An infectious molecular clone of an unusual macrophage-tropic and highly cytopathic strain of human immunodeficiency virus type 1.</title>
        <authorList>
            <person name="Collman R."/>
            <person name="Balliet J.W."/>
            <person name="Gregory S.A."/>
            <person name="Friedman H."/>
            <person name="Kolson D.L."/>
            <person name="Nathanson N."/>
            <person name="Srinivasan A."/>
        </authorList>
    </citation>
    <scope>NUCLEOTIDE SEQUENCE [GENOMIC DNA]</scope>
</reference>
<proteinExistence type="inferred from homology"/>